<comment type="function">
    <text>Is responsible for transferring galactose-1-phosphate to the lipid precursor undecaprenol phosphate in the first steps of O-polysaccharide biosynthesis.</text>
</comment>
<comment type="catalytic activity">
    <reaction>
        <text>di-trans,octa-cis-undecaprenyl phosphate + UDP-alpha-D-galactose = alpha-D-galactosyl-di-trans,octa-cis-undecaprenyl diphosphate + UMP</text>
        <dbReference type="Rhea" id="RHEA:11652"/>
        <dbReference type="ChEBI" id="CHEBI:57865"/>
        <dbReference type="ChEBI" id="CHEBI:60392"/>
        <dbReference type="ChEBI" id="CHEBI:66914"/>
        <dbReference type="ChEBI" id="CHEBI:138733"/>
        <dbReference type="EC" id="2.7.8.6"/>
    </reaction>
</comment>
<comment type="pathway">
    <text>Bacterial outer membrane biogenesis; LPS O-antigen biosynthesis.</text>
</comment>
<comment type="subcellular location">
    <subcellularLocation>
        <location>Cell inner membrane</location>
        <topology>Multi-pass membrane protein</topology>
    </subcellularLocation>
</comment>
<comment type="similarity">
    <text evidence="2">Belongs to the bacterial sugar transferase family.</text>
</comment>
<sequence length="476" mass="56198">MDNIDNKYNPQLCKIFLAISDLIFFNLALWFSLGCVYFIFDQVQRFIPQDQLDTRVITHFILSVVCVGWFWIRLRHYTYRKPFWYELKEIFRTIVIFAIFDLALIAFTKWQFSRYVWVFCWTFALILVPFFRALTKHLLNKLGIWKKKTIILGSGQNARGAYSALQSEEMMGFDVIAFFDTDASDAEINMLPVIKDTEIIWDLNRTGDVHYILAYEYTELEKTHFWLRELSKHHCRSVTVVPSFRGLPLYNTDMSFIFSHEVMLLRIQNNLAKRSSRFLKRTFDIVCSIMILIIASPLMIYLWYKVTRDGGPAIYGHQRVGRHGKLFPCYKFRSMVMNSQEVLKELLANDPIARAEWEKDFKLKNDPRITAVGRFIRKTSLDELPQLFNVLKGDMSLVGPRPIVSDELERYCDDVDYYLMAKPGMTGLWQVSGRNDVDYDTRVYFDSWYVKNWTLWNDIAILFKTAKVVLRRDGAY</sequence>
<keyword id="KW-0002">3D-structure</keyword>
<keyword id="KW-0997">Cell inner membrane</keyword>
<keyword id="KW-1003">Cell membrane</keyword>
<keyword id="KW-0448">Lipopolysaccharide biosynthesis</keyword>
<keyword id="KW-0472">Membrane</keyword>
<keyword id="KW-1185">Reference proteome</keyword>
<keyword id="KW-0808">Transferase</keyword>
<keyword id="KW-0812">Transmembrane</keyword>
<keyword id="KW-1133">Transmembrane helix</keyword>
<reference key="1">
    <citation type="journal article" date="1991" name="Mol. Microbiol.">
        <title>Structure and sequence of the rfb (O antigen) gene cluster of Salmonella serovar typhimurium (strain LT2).</title>
        <authorList>
            <person name="Jiang X.-M."/>
            <person name="Neal B."/>
            <person name="Santiago F."/>
            <person name="Lee S.J."/>
            <person name="Romana L.K."/>
            <person name="Reeves P.R."/>
        </authorList>
    </citation>
    <scope>NUCLEOTIDE SEQUENCE [GENOMIC DNA]</scope>
    <source>
        <strain>LT2</strain>
    </source>
</reference>
<reference key="2">
    <citation type="journal article" date="2001" name="Nature">
        <title>Complete genome sequence of Salmonella enterica serovar Typhimurium LT2.</title>
        <authorList>
            <person name="McClelland M."/>
            <person name="Sanderson K.E."/>
            <person name="Spieth J."/>
            <person name="Clifton S.W."/>
            <person name="Latreille P."/>
            <person name="Courtney L."/>
            <person name="Porwollik S."/>
            <person name="Ali J."/>
            <person name="Dante M."/>
            <person name="Du F."/>
            <person name="Hou S."/>
            <person name="Layman D."/>
            <person name="Leonard S."/>
            <person name="Nguyen C."/>
            <person name="Scott K."/>
            <person name="Holmes A."/>
            <person name="Grewal N."/>
            <person name="Mulvaney E."/>
            <person name="Ryan E."/>
            <person name="Sun H."/>
            <person name="Florea L."/>
            <person name="Miller W."/>
            <person name="Stoneking T."/>
            <person name="Nhan M."/>
            <person name="Waterston R."/>
            <person name="Wilson R.K."/>
        </authorList>
    </citation>
    <scope>NUCLEOTIDE SEQUENCE [LARGE SCALE GENOMIC DNA]</scope>
    <source>
        <strain>LT2 / SGSC1412 / ATCC 700720</strain>
    </source>
</reference>
<evidence type="ECO:0000255" key="1"/>
<evidence type="ECO:0000305" key="2"/>
<protein>
    <recommendedName>
        <fullName>Undecaprenyl-phosphate galactose phosphotransferase</fullName>
        <ecNumber>2.7.8.6</ecNumber>
    </recommendedName>
    <alternativeName>
        <fullName>Galactosyl-P-P-undecaprenol synthase</fullName>
    </alternativeName>
</protein>
<proteinExistence type="evidence at protein level"/>
<accession>P26406</accession>
<name>RFBP_SALTY</name>
<gene>
    <name type="primary">rfbP</name>
    <name type="ordered locus">STM2082</name>
</gene>
<feature type="chain" id="PRO_0000166468" description="Undecaprenyl-phosphate galactose phosphotransferase">
    <location>
        <begin position="1"/>
        <end position="476"/>
    </location>
</feature>
<feature type="transmembrane region" description="Helical" evidence="1">
    <location>
        <begin position="15"/>
        <end position="35"/>
    </location>
</feature>
<feature type="transmembrane region" description="Helical" evidence="1">
    <location>
        <begin position="52"/>
        <end position="72"/>
    </location>
</feature>
<feature type="transmembrane region" description="Helical" evidence="1">
    <location>
        <begin position="93"/>
        <end position="113"/>
    </location>
</feature>
<feature type="transmembrane region" description="Helical" evidence="1">
    <location>
        <begin position="115"/>
        <end position="135"/>
    </location>
</feature>
<feature type="transmembrane region" description="Helical" evidence="1">
    <location>
        <begin position="283"/>
        <end position="303"/>
    </location>
</feature>
<feature type="topological domain" description="Cytoplasmic" evidence="2">
    <location>
        <begin position="304"/>
        <end position="476"/>
    </location>
</feature>
<feature type="sequence conflict" description="In Ref. 1; CAA40130." evidence="2" ref="1">
    <original>Y</original>
    <variation>I</variation>
    <location>
        <position position="79"/>
    </location>
</feature>
<dbReference type="EC" id="2.7.8.6"/>
<dbReference type="EMBL" id="X56793">
    <property type="protein sequence ID" value="CAA40130.1"/>
    <property type="molecule type" value="Genomic_DNA"/>
</dbReference>
<dbReference type="EMBL" id="AE006468">
    <property type="protein sequence ID" value="AAL20986.1"/>
    <property type="molecule type" value="Genomic_DNA"/>
</dbReference>
<dbReference type="PIR" id="S15314">
    <property type="entry name" value="S15314"/>
</dbReference>
<dbReference type="RefSeq" id="NP_461027.1">
    <property type="nucleotide sequence ID" value="NC_003197.2"/>
</dbReference>
<dbReference type="RefSeq" id="WP_000368707.1">
    <property type="nucleotide sequence ID" value="NC_003197.2"/>
</dbReference>
<dbReference type="PDB" id="8T53">
    <property type="method" value="EM"/>
    <property type="resolution" value="4.10 A"/>
    <property type="chains" value="A/B=1-476"/>
</dbReference>
<dbReference type="PDBsum" id="8T53"/>
<dbReference type="EMDB" id="EMD-41042"/>
<dbReference type="SMR" id="P26406"/>
<dbReference type="STRING" id="99287.STM2082"/>
<dbReference type="PaxDb" id="99287-STM2082"/>
<dbReference type="DNASU" id="1253603"/>
<dbReference type="GeneID" id="1253603"/>
<dbReference type="KEGG" id="stm:STM2082"/>
<dbReference type="PATRIC" id="fig|99287.12.peg.2204"/>
<dbReference type="HOGENOM" id="CLU_024920_3_5_6"/>
<dbReference type="OMA" id="MFSHEMM"/>
<dbReference type="PhylomeDB" id="P26406"/>
<dbReference type="BioCyc" id="MetaCyc:STM2082-MONOMER"/>
<dbReference type="BioCyc" id="SENT99287:STM2082-MONOMER"/>
<dbReference type="UniPathway" id="UPA00281"/>
<dbReference type="PHI-base" id="PHI:8138"/>
<dbReference type="Proteomes" id="UP000001014">
    <property type="component" value="Chromosome"/>
</dbReference>
<dbReference type="GO" id="GO:0005886">
    <property type="term" value="C:plasma membrane"/>
    <property type="evidence" value="ECO:0007669"/>
    <property type="project" value="UniProtKB-SubCell"/>
</dbReference>
<dbReference type="GO" id="GO:0016780">
    <property type="term" value="F:phosphotransferase activity, for other substituted phosphate groups"/>
    <property type="evidence" value="ECO:0000318"/>
    <property type="project" value="GO_Central"/>
</dbReference>
<dbReference type="GO" id="GO:0047360">
    <property type="term" value="F:undecaprenyl-phosphate galactose phosphotransferase activity"/>
    <property type="evidence" value="ECO:0007669"/>
    <property type="project" value="UniProtKB-EC"/>
</dbReference>
<dbReference type="GO" id="GO:0009243">
    <property type="term" value="P:O antigen biosynthetic process"/>
    <property type="evidence" value="ECO:0007669"/>
    <property type="project" value="UniProtKB-UniPathway"/>
</dbReference>
<dbReference type="Gene3D" id="3.40.50.720">
    <property type="entry name" value="NAD(P)-binding Rossmann-like Domain"/>
    <property type="match status" value="1"/>
</dbReference>
<dbReference type="InterPro" id="IPR003362">
    <property type="entry name" value="Bact_transf"/>
</dbReference>
<dbReference type="InterPro" id="IPR017475">
    <property type="entry name" value="EPS_sugar_tfrase"/>
</dbReference>
<dbReference type="InterPro" id="IPR017472">
    <property type="entry name" value="Undecaprenyl-P_galact_Ptfrase"/>
</dbReference>
<dbReference type="NCBIfam" id="TIGR03025">
    <property type="entry name" value="EPS_sugtrans"/>
    <property type="match status" value="1"/>
</dbReference>
<dbReference type="NCBIfam" id="NF011751">
    <property type="entry name" value="PRK15204.1"/>
    <property type="match status" value="1"/>
</dbReference>
<dbReference type="NCBIfam" id="TIGR03022">
    <property type="entry name" value="WbaP_sugtrans"/>
    <property type="match status" value="1"/>
</dbReference>
<dbReference type="PANTHER" id="PTHR30576">
    <property type="entry name" value="COLANIC BIOSYNTHESIS UDP-GLUCOSE LIPID CARRIER TRANSFERASE"/>
    <property type="match status" value="1"/>
</dbReference>
<dbReference type="PANTHER" id="PTHR30576:SF4">
    <property type="entry name" value="UNDECAPRENYL-PHOSPHATE GALACTOSE PHOSPHOTRANSFERASE"/>
    <property type="match status" value="1"/>
</dbReference>
<dbReference type="Pfam" id="PF02397">
    <property type="entry name" value="Bac_transf"/>
    <property type="match status" value="1"/>
</dbReference>
<dbReference type="Pfam" id="PF13727">
    <property type="entry name" value="CoA_binding_3"/>
    <property type="match status" value="1"/>
</dbReference>
<organism>
    <name type="scientific">Salmonella typhimurium (strain LT2 / SGSC1412 / ATCC 700720)</name>
    <dbReference type="NCBI Taxonomy" id="99287"/>
    <lineage>
        <taxon>Bacteria</taxon>
        <taxon>Pseudomonadati</taxon>
        <taxon>Pseudomonadota</taxon>
        <taxon>Gammaproteobacteria</taxon>
        <taxon>Enterobacterales</taxon>
        <taxon>Enterobacteriaceae</taxon>
        <taxon>Salmonella</taxon>
    </lineage>
</organism>